<reference key="1">
    <citation type="submission" date="2005-07" db="EMBL/GenBank/DDBJ databases">
        <title>Complete sequence of Synechococcus sp. CC9605.</title>
        <authorList>
            <consortium name="US DOE Joint Genome Institute"/>
            <person name="Copeland A."/>
            <person name="Lucas S."/>
            <person name="Lapidus A."/>
            <person name="Barry K."/>
            <person name="Detter J.C."/>
            <person name="Glavina T."/>
            <person name="Hammon N."/>
            <person name="Israni S."/>
            <person name="Pitluck S."/>
            <person name="Schmutz J."/>
            <person name="Martinez M."/>
            <person name="Larimer F."/>
            <person name="Land M."/>
            <person name="Kyrpides N."/>
            <person name="Ivanova N."/>
            <person name="Richardson P."/>
        </authorList>
    </citation>
    <scope>NUCLEOTIDE SEQUENCE [LARGE SCALE GENOMIC DNA]</scope>
    <source>
        <strain>CC9605</strain>
    </source>
</reference>
<proteinExistence type="inferred from homology"/>
<keyword id="KW-0687">Ribonucleoprotein</keyword>
<keyword id="KW-0689">Ribosomal protein</keyword>
<keyword id="KW-0694">RNA-binding</keyword>
<keyword id="KW-0699">rRNA-binding</keyword>
<evidence type="ECO:0000255" key="1">
    <source>
        <dbReference type="HAMAP-Rule" id="MF_00382"/>
    </source>
</evidence>
<evidence type="ECO:0000305" key="2"/>
<name>RL20_SYNSC</name>
<feature type="chain" id="PRO_0000243746" description="Large ribosomal subunit protein bL20">
    <location>
        <begin position="1"/>
        <end position="115"/>
    </location>
</feature>
<gene>
    <name evidence="1" type="primary">rplT</name>
    <name evidence="1" type="synonym">rpl20</name>
    <name type="ordered locus">Syncc9605_0057</name>
</gene>
<comment type="function">
    <text evidence="1">Binds directly to 23S ribosomal RNA and is necessary for the in vitro assembly process of the 50S ribosomal subunit. It is not involved in the protein synthesizing functions of that subunit.</text>
</comment>
<comment type="similarity">
    <text evidence="1">Belongs to the bacterial ribosomal protein bL20 family.</text>
</comment>
<protein>
    <recommendedName>
        <fullName evidence="1">Large ribosomal subunit protein bL20</fullName>
    </recommendedName>
    <alternativeName>
        <fullName evidence="2">50S ribosomal protein L20</fullName>
    </alternativeName>
</protein>
<organism>
    <name type="scientific">Synechococcus sp. (strain CC9605)</name>
    <dbReference type="NCBI Taxonomy" id="110662"/>
    <lineage>
        <taxon>Bacteria</taxon>
        <taxon>Bacillati</taxon>
        <taxon>Cyanobacteriota</taxon>
        <taxon>Cyanophyceae</taxon>
        <taxon>Synechococcales</taxon>
        <taxon>Synechococcaceae</taxon>
        <taxon>Synechococcus</taxon>
    </lineage>
</organism>
<dbReference type="EMBL" id="CP000110">
    <property type="protein sequence ID" value="ABB33836.1"/>
    <property type="molecule type" value="Genomic_DNA"/>
</dbReference>
<dbReference type="RefSeq" id="WP_011363098.1">
    <property type="nucleotide sequence ID" value="NC_007516.1"/>
</dbReference>
<dbReference type="SMR" id="Q3ANJ6"/>
<dbReference type="STRING" id="110662.Syncc9605_0057"/>
<dbReference type="KEGG" id="syd:Syncc9605_0057"/>
<dbReference type="eggNOG" id="COG0292">
    <property type="taxonomic scope" value="Bacteria"/>
</dbReference>
<dbReference type="HOGENOM" id="CLU_123265_0_1_3"/>
<dbReference type="OrthoDB" id="9808966at2"/>
<dbReference type="GO" id="GO:1990904">
    <property type="term" value="C:ribonucleoprotein complex"/>
    <property type="evidence" value="ECO:0007669"/>
    <property type="project" value="UniProtKB-KW"/>
</dbReference>
<dbReference type="GO" id="GO:0005840">
    <property type="term" value="C:ribosome"/>
    <property type="evidence" value="ECO:0007669"/>
    <property type="project" value="UniProtKB-KW"/>
</dbReference>
<dbReference type="GO" id="GO:0019843">
    <property type="term" value="F:rRNA binding"/>
    <property type="evidence" value="ECO:0007669"/>
    <property type="project" value="UniProtKB-UniRule"/>
</dbReference>
<dbReference type="GO" id="GO:0003735">
    <property type="term" value="F:structural constituent of ribosome"/>
    <property type="evidence" value="ECO:0007669"/>
    <property type="project" value="InterPro"/>
</dbReference>
<dbReference type="GO" id="GO:0000027">
    <property type="term" value="P:ribosomal large subunit assembly"/>
    <property type="evidence" value="ECO:0007669"/>
    <property type="project" value="UniProtKB-UniRule"/>
</dbReference>
<dbReference type="GO" id="GO:0006412">
    <property type="term" value="P:translation"/>
    <property type="evidence" value="ECO:0007669"/>
    <property type="project" value="InterPro"/>
</dbReference>
<dbReference type="CDD" id="cd07026">
    <property type="entry name" value="Ribosomal_L20"/>
    <property type="match status" value="1"/>
</dbReference>
<dbReference type="FunFam" id="1.10.1900.20:FF:000001">
    <property type="entry name" value="50S ribosomal protein L20"/>
    <property type="match status" value="1"/>
</dbReference>
<dbReference type="Gene3D" id="6.10.160.10">
    <property type="match status" value="1"/>
</dbReference>
<dbReference type="Gene3D" id="1.10.1900.20">
    <property type="entry name" value="Ribosomal protein L20"/>
    <property type="match status" value="1"/>
</dbReference>
<dbReference type="HAMAP" id="MF_00382">
    <property type="entry name" value="Ribosomal_bL20"/>
    <property type="match status" value="1"/>
</dbReference>
<dbReference type="InterPro" id="IPR005813">
    <property type="entry name" value="Ribosomal_bL20"/>
</dbReference>
<dbReference type="InterPro" id="IPR049946">
    <property type="entry name" value="RIBOSOMAL_L20_CS"/>
</dbReference>
<dbReference type="InterPro" id="IPR035566">
    <property type="entry name" value="Ribosomal_protein_bL20_C"/>
</dbReference>
<dbReference type="NCBIfam" id="TIGR01032">
    <property type="entry name" value="rplT_bact"/>
    <property type="match status" value="1"/>
</dbReference>
<dbReference type="PANTHER" id="PTHR10986">
    <property type="entry name" value="39S RIBOSOMAL PROTEIN L20"/>
    <property type="match status" value="1"/>
</dbReference>
<dbReference type="Pfam" id="PF00453">
    <property type="entry name" value="Ribosomal_L20"/>
    <property type="match status" value="1"/>
</dbReference>
<dbReference type="PRINTS" id="PR00062">
    <property type="entry name" value="RIBOSOMALL20"/>
</dbReference>
<dbReference type="SUPFAM" id="SSF74731">
    <property type="entry name" value="Ribosomal protein L20"/>
    <property type="match status" value="1"/>
</dbReference>
<dbReference type="PROSITE" id="PS00937">
    <property type="entry name" value="RIBOSOMAL_L20"/>
    <property type="match status" value="1"/>
</dbReference>
<sequence length="115" mass="13113">MARVKRGNVARKRRNKILRLARGFRGGNGTLFRTANQRVMKALCNAYRDRRRRKRDFRRLWIARINAAARLNGVSYSRLMGGLKKADVRLNRKMLAQLAVVDPGSFTNVVAAAKS</sequence>
<accession>Q3ANJ6</accession>